<comment type="function">
    <text evidence="6 7 8 10">Mediates thiol-dependent retention in the early secretory pathway, forming mixed disulfides with substrate proteins through its conserved CRFS motif (PubMed:11847130, PubMed:14517240). Inhibits the calcium channel activity of ITPR1 (PubMed:15652484). May have a role in the control of oxidative protein folding in the endoplasmic reticulum (PubMed:11847130, PubMed:14517240, PubMed:29858230). Required to retain ERO1A and ERO1B in the endoplasmic reticulum (PubMed:11847130, PubMed:29858230).</text>
</comment>
<comment type="subunit">
    <text evidence="2 6 8 10">Forms mixed disulfides with both ERO1A and ERO1B and cargo folding intermediates; the interactions with ERO1A and ERO1B result in their retention in the endoplasmic reticulum (PubMed:11847130, PubMed:29858230). Directly interacts with ITPR1 in a pH-, redox state- and calcium-dependent manner, but not with ITPR2 or ITPR3 (PubMed:15652484). The strength of this interaction inversely correlates with calcium concentration (By similarity).</text>
</comment>
<comment type="interaction">
    <interactant intactId="EBI-541644">
        <id>Q9BS26</id>
    </interactant>
    <interactant intactId="EBI-25646567">
        <id>Q06481-5</id>
        <label>APLP2</label>
    </interactant>
    <organismsDiffer>false</organismsDiffer>
    <experiments>3</experiments>
</comment>
<comment type="interaction">
    <interactant intactId="EBI-541644">
        <id>Q9BS26</id>
    </interactant>
    <interactant intactId="EBI-77613">
        <id>P05067</id>
        <label>APP</label>
    </interactant>
    <organismsDiffer>false</organismsDiffer>
    <experiments>3</experiments>
</comment>
<comment type="interaction">
    <interactant intactId="EBI-541644">
        <id>Q9BS26</id>
    </interactant>
    <interactant intactId="EBI-9087876">
        <id>P48730-2</id>
        <label>CSNK1D</label>
    </interactant>
    <organismsDiffer>false</organismsDiffer>
    <experiments>3</experiments>
</comment>
<comment type="interaction">
    <interactant intactId="EBI-541644">
        <id>Q9BS26</id>
    </interactant>
    <interactant intactId="EBI-1057738">
        <id>P49257</id>
        <label>LMAN1</label>
    </interactant>
    <organismsDiffer>false</organismsDiffer>
    <experiments>3</experiments>
</comment>
<comment type="interaction">
    <interactant intactId="EBI-541644">
        <id>Q9BS26</id>
    </interactant>
    <interactant intactId="EBI-79452">
        <id>P07948</id>
        <label>LYN</label>
    </interactant>
    <organismsDiffer>false</organismsDiffer>
    <experiments>3</experiments>
</comment>
<comment type="subcellular location">
    <subcellularLocation>
        <location evidence="6 8">Endoplasmic reticulum lumen</location>
    </subcellularLocation>
</comment>
<comment type="induction">
    <text evidence="6">Up-regulated by inducers of the unfolded protein response (UPR), including tunicamycin and dithiothreitol.</text>
</comment>
<comment type="sequence caution" evidence="11">
    <conflict type="erroneous initiation">
        <sequence resource="EMBL-CDS" id="BAA25499"/>
    </conflict>
</comment>
<name>ERP44_HUMAN</name>
<gene>
    <name type="primary">ERP44</name>
    <name type="synonym">KIAA0573</name>
    <name type="synonym">TXNDC4</name>
    <name type="ORF">UNQ532/PRO1075</name>
</gene>
<sequence>MHPAVFLSLPDLRCSLLLLVTWVFTPVTTEITSLDTENIDEILNNADVALVNFYADWCRFSQMLHPIFEEASDVIKEEFPNENQVVFARVDCDQHSDIAQRYRISKYPTLKLFRNGMMMKREYRGQRSVKALADYIRQQKSDPIQEIRDLAEITTLDRSKRNIIGYFEQKDSDNYRVFERVANILHDDCAFLSAFGDVSKPERYSGDNIIYKPPGHSAPDMVYLGAMTNFDVTYNWIQDKCVPLVREITFENGEELTEEGLPFLILFHMKEDTESLEIFQNEVARQLISEKGTINFLHADCDKFRHPLLHIQKTPADCPVIAIDSFRHMYVFGDFKDVLIPGKLKQFVFDLHSGKLHREFHHGPDPTDTAPGEQAQDVASSPPESSFQKLAPSEYRYTLLRDRDEL</sequence>
<protein>
    <recommendedName>
        <fullName>Endoplasmic reticulum resident protein 44</fullName>
        <shortName>ER protein 44</shortName>
        <shortName>ERp44</shortName>
    </recommendedName>
    <alternativeName>
        <fullName>Thioredoxin domain-containing protein 4</fullName>
    </alternativeName>
</protein>
<dbReference type="EMBL" id="AJ344330">
    <property type="protein sequence ID" value="CAC87611.1"/>
    <property type="molecule type" value="mRNA"/>
</dbReference>
<dbReference type="EMBL" id="AB011145">
    <property type="protein sequence ID" value="BAA25499.1"/>
    <property type="status" value="ALT_INIT"/>
    <property type="molecule type" value="mRNA"/>
</dbReference>
<dbReference type="EMBL" id="AY359048">
    <property type="protein sequence ID" value="AAQ89407.1"/>
    <property type="molecule type" value="mRNA"/>
</dbReference>
<dbReference type="EMBL" id="AK075024">
    <property type="protein sequence ID" value="BAG52054.1"/>
    <property type="molecule type" value="mRNA"/>
</dbReference>
<dbReference type="EMBL" id="AL360084">
    <property type="status" value="NOT_ANNOTATED_CDS"/>
    <property type="molecule type" value="Genomic_DNA"/>
</dbReference>
<dbReference type="EMBL" id="AL137072">
    <property type="status" value="NOT_ANNOTATED_CDS"/>
    <property type="molecule type" value="Genomic_DNA"/>
</dbReference>
<dbReference type="EMBL" id="AL358937">
    <property type="status" value="NOT_ANNOTATED_CDS"/>
    <property type="molecule type" value="Genomic_DNA"/>
</dbReference>
<dbReference type="EMBL" id="BC005374">
    <property type="protein sequence ID" value="AAH05374.1"/>
    <property type="molecule type" value="mRNA"/>
</dbReference>
<dbReference type="CCDS" id="CCDS35082.1"/>
<dbReference type="RefSeq" id="NP_055866.1">
    <property type="nucleotide sequence ID" value="NM_015051.3"/>
</dbReference>
<dbReference type="PDB" id="2R2J">
    <property type="method" value="X-ray"/>
    <property type="resolution" value="2.60 A"/>
    <property type="chains" value="A=30-406"/>
</dbReference>
<dbReference type="PDB" id="5GU6">
    <property type="method" value="X-ray"/>
    <property type="resolution" value="2.00 A"/>
    <property type="chains" value="A=30-402"/>
</dbReference>
<dbReference type="PDB" id="5GU7">
    <property type="method" value="X-ray"/>
    <property type="resolution" value="2.05 A"/>
    <property type="chains" value="C=30-402"/>
</dbReference>
<dbReference type="PDB" id="5HQP">
    <property type="method" value="X-ray"/>
    <property type="resolution" value="2.60 A"/>
    <property type="chains" value="C/D=30-406"/>
</dbReference>
<dbReference type="PDB" id="5XWM">
    <property type="method" value="X-ray"/>
    <property type="resolution" value="2.45 A"/>
    <property type="chains" value="A/B/C/D=30-406"/>
</dbReference>
<dbReference type="PDBsum" id="2R2J"/>
<dbReference type="PDBsum" id="5GU6"/>
<dbReference type="PDBsum" id="5GU7"/>
<dbReference type="PDBsum" id="5HQP"/>
<dbReference type="PDBsum" id="5XWM"/>
<dbReference type="SMR" id="Q9BS26"/>
<dbReference type="BioGRID" id="116704">
    <property type="interactions" value="199"/>
</dbReference>
<dbReference type="FunCoup" id="Q9BS26">
    <property type="interactions" value="2466"/>
</dbReference>
<dbReference type="IntAct" id="Q9BS26">
    <property type="interactions" value="116"/>
</dbReference>
<dbReference type="MINT" id="Q9BS26"/>
<dbReference type="STRING" id="9606.ENSP00000262455"/>
<dbReference type="GlyCosmos" id="Q9BS26">
    <property type="glycosylation" value="4 sites, 5 glycans"/>
</dbReference>
<dbReference type="GlyGen" id="Q9BS26">
    <property type="glycosylation" value="9 sites, 6 O-linked glycans (9 sites)"/>
</dbReference>
<dbReference type="iPTMnet" id="Q9BS26"/>
<dbReference type="MetOSite" id="Q9BS26"/>
<dbReference type="PhosphoSitePlus" id="Q9BS26"/>
<dbReference type="SwissPalm" id="Q9BS26"/>
<dbReference type="BioMuta" id="ERP44"/>
<dbReference type="DMDM" id="31077035"/>
<dbReference type="REPRODUCTION-2DPAGE" id="IPI00401264"/>
<dbReference type="CPTAC" id="CPTAC-363"/>
<dbReference type="CPTAC" id="CPTAC-364"/>
<dbReference type="jPOST" id="Q9BS26"/>
<dbReference type="MassIVE" id="Q9BS26"/>
<dbReference type="PaxDb" id="9606-ENSP00000262455"/>
<dbReference type="PeptideAtlas" id="Q9BS26"/>
<dbReference type="ProteomicsDB" id="78861"/>
<dbReference type="Pumba" id="Q9BS26"/>
<dbReference type="Antibodypedia" id="753">
    <property type="antibodies" value="307 antibodies from 33 providers"/>
</dbReference>
<dbReference type="DNASU" id="23071"/>
<dbReference type="Ensembl" id="ENST00000262455.7">
    <property type="protein sequence ID" value="ENSP00000262455.6"/>
    <property type="gene ID" value="ENSG00000023318.9"/>
</dbReference>
<dbReference type="GeneID" id="23071"/>
<dbReference type="KEGG" id="hsa:23071"/>
<dbReference type="MANE-Select" id="ENST00000262455.7">
    <property type="protein sequence ID" value="ENSP00000262455.6"/>
    <property type="RefSeq nucleotide sequence ID" value="NM_015051.3"/>
    <property type="RefSeq protein sequence ID" value="NP_055866.1"/>
</dbReference>
<dbReference type="UCSC" id="uc004bam.4">
    <property type="organism name" value="human"/>
</dbReference>
<dbReference type="AGR" id="HGNC:18311"/>
<dbReference type="CTD" id="23071"/>
<dbReference type="DisGeNET" id="23071"/>
<dbReference type="GeneCards" id="ERP44"/>
<dbReference type="HGNC" id="HGNC:18311">
    <property type="gene designation" value="ERP44"/>
</dbReference>
<dbReference type="HPA" id="ENSG00000023318">
    <property type="expression patterns" value="Low tissue specificity"/>
</dbReference>
<dbReference type="MIM" id="609170">
    <property type="type" value="gene"/>
</dbReference>
<dbReference type="neXtProt" id="NX_Q9BS26"/>
<dbReference type="OpenTargets" id="ENSG00000023318"/>
<dbReference type="PharmGKB" id="PA164719295"/>
<dbReference type="VEuPathDB" id="HostDB:ENSG00000023318"/>
<dbReference type="eggNOG" id="KOG0912">
    <property type="taxonomic scope" value="Eukaryota"/>
</dbReference>
<dbReference type="GeneTree" id="ENSGT00930000151031"/>
<dbReference type="HOGENOM" id="CLU_054449_1_0_1"/>
<dbReference type="InParanoid" id="Q9BS26"/>
<dbReference type="OMA" id="DWCRFSN"/>
<dbReference type="OrthoDB" id="294696at2759"/>
<dbReference type="PAN-GO" id="Q9BS26">
    <property type="GO annotations" value="4 GO annotations based on evolutionary models"/>
</dbReference>
<dbReference type="PhylomeDB" id="Q9BS26"/>
<dbReference type="TreeFam" id="TF106378"/>
<dbReference type="PathwayCommons" id="Q9BS26"/>
<dbReference type="Reactome" id="R-HSA-6798695">
    <property type="pathway name" value="Neutrophil degranulation"/>
</dbReference>
<dbReference type="SignaLink" id="Q9BS26"/>
<dbReference type="SIGNOR" id="Q9BS26"/>
<dbReference type="BioGRID-ORCS" id="23071">
    <property type="hits" value="32 hits in 1174 CRISPR screens"/>
</dbReference>
<dbReference type="ChiTaRS" id="ERP44">
    <property type="organism name" value="human"/>
</dbReference>
<dbReference type="EvolutionaryTrace" id="Q9BS26"/>
<dbReference type="GeneWiki" id="ERP44"/>
<dbReference type="GenomeRNAi" id="23071"/>
<dbReference type="Pharos" id="Q9BS26">
    <property type="development level" value="Tbio"/>
</dbReference>
<dbReference type="PRO" id="PR:Q9BS26"/>
<dbReference type="Proteomes" id="UP000005640">
    <property type="component" value="Chromosome 9"/>
</dbReference>
<dbReference type="RNAct" id="Q9BS26">
    <property type="molecule type" value="protein"/>
</dbReference>
<dbReference type="Bgee" id="ENSG00000023318">
    <property type="expression patterns" value="Expressed in type B pancreatic cell and 216 other cell types or tissues"/>
</dbReference>
<dbReference type="ExpressionAtlas" id="Q9BS26">
    <property type="expression patterns" value="baseline and differential"/>
</dbReference>
<dbReference type="GO" id="GO:0009986">
    <property type="term" value="C:cell surface"/>
    <property type="evidence" value="ECO:0000314"/>
    <property type="project" value="MGI"/>
</dbReference>
<dbReference type="GO" id="GO:0005788">
    <property type="term" value="C:endoplasmic reticulum lumen"/>
    <property type="evidence" value="ECO:0000314"/>
    <property type="project" value="UniProtKB"/>
</dbReference>
<dbReference type="GO" id="GO:0005789">
    <property type="term" value="C:endoplasmic reticulum membrane"/>
    <property type="evidence" value="ECO:0000314"/>
    <property type="project" value="UniProtKB"/>
</dbReference>
<dbReference type="GO" id="GO:0005793">
    <property type="term" value="C:endoplasmic reticulum-Golgi intermediate compartment"/>
    <property type="evidence" value="ECO:0000314"/>
    <property type="project" value="UniProtKB"/>
</dbReference>
<dbReference type="GO" id="GO:0070062">
    <property type="term" value="C:extracellular exosome"/>
    <property type="evidence" value="ECO:0007005"/>
    <property type="project" value="UniProtKB"/>
</dbReference>
<dbReference type="GO" id="GO:0005576">
    <property type="term" value="C:extracellular region"/>
    <property type="evidence" value="ECO:0000304"/>
    <property type="project" value="Reactome"/>
</dbReference>
<dbReference type="GO" id="GO:0035580">
    <property type="term" value="C:specific granule lumen"/>
    <property type="evidence" value="ECO:0000304"/>
    <property type="project" value="Reactome"/>
</dbReference>
<dbReference type="GO" id="GO:0003756">
    <property type="term" value="F:protein disulfide isomerase activity"/>
    <property type="evidence" value="ECO:0000314"/>
    <property type="project" value="UniProtKB"/>
</dbReference>
<dbReference type="GO" id="GO:0045454">
    <property type="term" value="P:cell redox homeostasis"/>
    <property type="evidence" value="ECO:0000304"/>
    <property type="project" value="UniProtKB"/>
</dbReference>
<dbReference type="GO" id="GO:0009100">
    <property type="term" value="P:glycoprotein metabolic process"/>
    <property type="evidence" value="ECO:0000314"/>
    <property type="project" value="UniProtKB"/>
</dbReference>
<dbReference type="GO" id="GO:0006457">
    <property type="term" value="P:protein folding"/>
    <property type="evidence" value="ECO:0000314"/>
    <property type="project" value="UniProtKB"/>
</dbReference>
<dbReference type="GO" id="GO:0034976">
    <property type="term" value="P:response to endoplasmic reticulum stress"/>
    <property type="evidence" value="ECO:0000314"/>
    <property type="project" value="UniProtKB"/>
</dbReference>
<dbReference type="GO" id="GO:0006986">
    <property type="term" value="P:response to unfolded protein"/>
    <property type="evidence" value="ECO:0000314"/>
    <property type="project" value="UniProtKB"/>
</dbReference>
<dbReference type="CDD" id="cd02996">
    <property type="entry name" value="PDI_a_ERp44"/>
    <property type="match status" value="1"/>
</dbReference>
<dbReference type="CDD" id="cd03072">
    <property type="entry name" value="PDI_b'_ERp44"/>
    <property type="match status" value="1"/>
</dbReference>
<dbReference type="CDD" id="cd03070">
    <property type="entry name" value="PDI_b_ERp44"/>
    <property type="match status" value="1"/>
</dbReference>
<dbReference type="DisProt" id="DP02173"/>
<dbReference type="FunFam" id="3.40.30.10:FF:000051">
    <property type="entry name" value="endoplasmic reticulum resident protein 44"/>
    <property type="match status" value="1"/>
</dbReference>
<dbReference type="FunFam" id="3.40.30.10:FF:000074">
    <property type="entry name" value="endoplasmic reticulum resident protein 44"/>
    <property type="match status" value="1"/>
</dbReference>
<dbReference type="FunFam" id="3.40.30.10:FF:000128">
    <property type="entry name" value="endoplasmic reticulum resident protein 44"/>
    <property type="match status" value="1"/>
</dbReference>
<dbReference type="Gene3D" id="3.40.30.10">
    <property type="entry name" value="Glutaredoxin"/>
    <property type="match status" value="3"/>
</dbReference>
<dbReference type="InterPro" id="IPR052643">
    <property type="entry name" value="ERP44"/>
</dbReference>
<dbReference type="InterPro" id="IPR041862">
    <property type="entry name" value="ERp44_PDI_b"/>
</dbReference>
<dbReference type="InterPro" id="IPR041870">
    <property type="entry name" value="ERp44_PDI_b"/>
</dbReference>
<dbReference type="InterPro" id="IPR036249">
    <property type="entry name" value="Thioredoxin-like_sf"/>
</dbReference>
<dbReference type="InterPro" id="IPR013766">
    <property type="entry name" value="Thioredoxin_domain"/>
</dbReference>
<dbReference type="PANTHER" id="PTHR46295">
    <property type="entry name" value="ENDOPLASMIC RETICULUM RESIDENT PROTEIN 44"/>
    <property type="match status" value="1"/>
</dbReference>
<dbReference type="PANTHER" id="PTHR46295:SF1">
    <property type="entry name" value="ENDOPLASMIC RETICULUM RESIDENT PROTEIN 44"/>
    <property type="match status" value="1"/>
</dbReference>
<dbReference type="Pfam" id="PF00085">
    <property type="entry name" value="Thioredoxin"/>
    <property type="match status" value="1"/>
</dbReference>
<dbReference type="Pfam" id="PF13848">
    <property type="entry name" value="Thioredoxin_6"/>
    <property type="match status" value="1"/>
</dbReference>
<dbReference type="SUPFAM" id="SSF52833">
    <property type="entry name" value="Thioredoxin-like"/>
    <property type="match status" value="3"/>
</dbReference>
<dbReference type="PROSITE" id="PS00014">
    <property type="entry name" value="ER_TARGET"/>
    <property type="match status" value="1"/>
</dbReference>
<dbReference type="PROSITE" id="PS51352">
    <property type="entry name" value="THIOREDOXIN_2"/>
    <property type="match status" value="1"/>
</dbReference>
<reference key="1">
    <citation type="journal article" date="2002" name="EMBO J.">
        <title>ERp44, a novel endoplasmic reticulum folding assistant of the thioredoxin family.</title>
        <authorList>
            <person name="Anelli T."/>
            <person name="Alessio M."/>
            <person name="Mezghrani A."/>
            <person name="Simmen T."/>
            <person name="Talamo F."/>
            <person name="Bachi A."/>
            <person name="Sitia R."/>
        </authorList>
    </citation>
    <scope>NUCLEOTIDE SEQUENCE [MRNA]</scope>
    <scope>PROTEIN SEQUENCE OF 149-158 AND 314-327</scope>
    <scope>FUNCTION</scope>
    <scope>INTERACTION WITH ERO1A AND ERO1B</scope>
    <scope>MIXED DISULFIDE BOND FORMATION</scope>
    <scope>SUBCELLULAR LOCATION</scope>
    <scope>INDUCTION</scope>
    <source>
        <tissue>Cervix</tissue>
    </source>
</reference>
<reference key="2">
    <citation type="journal article" date="1998" name="DNA Res.">
        <title>Prediction of the coding sequences of unidentified human genes. IX. The complete sequences of 100 new cDNA clones from brain which can code for large proteins in vitro.</title>
        <authorList>
            <person name="Nagase T."/>
            <person name="Ishikawa K."/>
            <person name="Miyajima N."/>
            <person name="Tanaka A."/>
            <person name="Kotani H."/>
            <person name="Nomura N."/>
            <person name="Ohara O."/>
        </authorList>
    </citation>
    <scope>NUCLEOTIDE SEQUENCE [LARGE SCALE MRNA]</scope>
    <source>
        <tissue>Brain</tissue>
    </source>
</reference>
<reference key="3">
    <citation type="journal article" date="2003" name="Genome Res.">
        <title>The secreted protein discovery initiative (SPDI), a large-scale effort to identify novel human secreted and transmembrane proteins: a bioinformatics assessment.</title>
        <authorList>
            <person name="Clark H.F."/>
            <person name="Gurney A.L."/>
            <person name="Abaya E."/>
            <person name="Baker K."/>
            <person name="Baldwin D.T."/>
            <person name="Brush J."/>
            <person name="Chen J."/>
            <person name="Chow B."/>
            <person name="Chui C."/>
            <person name="Crowley C."/>
            <person name="Currell B."/>
            <person name="Deuel B."/>
            <person name="Dowd P."/>
            <person name="Eaton D."/>
            <person name="Foster J.S."/>
            <person name="Grimaldi C."/>
            <person name="Gu Q."/>
            <person name="Hass P.E."/>
            <person name="Heldens S."/>
            <person name="Huang A."/>
            <person name="Kim H.S."/>
            <person name="Klimowski L."/>
            <person name="Jin Y."/>
            <person name="Johnson S."/>
            <person name="Lee J."/>
            <person name="Lewis L."/>
            <person name="Liao D."/>
            <person name="Mark M.R."/>
            <person name="Robbie E."/>
            <person name="Sanchez C."/>
            <person name="Schoenfeld J."/>
            <person name="Seshagiri S."/>
            <person name="Simmons L."/>
            <person name="Singh J."/>
            <person name="Smith V."/>
            <person name="Stinson J."/>
            <person name="Vagts A."/>
            <person name="Vandlen R.L."/>
            <person name="Watanabe C."/>
            <person name="Wieand D."/>
            <person name="Woods K."/>
            <person name="Xie M.-H."/>
            <person name="Yansura D.G."/>
            <person name="Yi S."/>
            <person name="Yu G."/>
            <person name="Yuan J."/>
            <person name="Zhang M."/>
            <person name="Zhang Z."/>
            <person name="Goddard A.D."/>
            <person name="Wood W.I."/>
            <person name="Godowski P.J."/>
            <person name="Gray A.M."/>
        </authorList>
    </citation>
    <scope>NUCLEOTIDE SEQUENCE [LARGE SCALE MRNA]</scope>
</reference>
<reference key="4">
    <citation type="journal article" date="2004" name="Nat. Genet.">
        <title>Complete sequencing and characterization of 21,243 full-length human cDNAs.</title>
        <authorList>
            <person name="Ota T."/>
            <person name="Suzuki Y."/>
            <person name="Nishikawa T."/>
            <person name="Otsuki T."/>
            <person name="Sugiyama T."/>
            <person name="Irie R."/>
            <person name="Wakamatsu A."/>
            <person name="Hayashi K."/>
            <person name="Sato H."/>
            <person name="Nagai K."/>
            <person name="Kimura K."/>
            <person name="Makita H."/>
            <person name="Sekine M."/>
            <person name="Obayashi M."/>
            <person name="Nishi T."/>
            <person name="Shibahara T."/>
            <person name="Tanaka T."/>
            <person name="Ishii S."/>
            <person name="Yamamoto J."/>
            <person name="Saito K."/>
            <person name="Kawai Y."/>
            <person name="Isono Y."/>
            <person name="Nakamura Y."/>
            <person name="Nagahari K."/>
            <person name="Murakami K."/>
            <person name="Yasuda T."/>
            <person name="Iwayanagi T."/>
            <person name="Wagatsuma M."/>
            <person name="Shiratori A."/>
            <person name="Sudo H."/>
            <person name="Hosoiri T."/>
            <person name="Kaku Y."/>
            <person name="Kodaira H."/>
            <person name="Kondo H."/>
            <person name="Sugawara M."/>
            <person name="Takahashi M."/>
            <person name="Kanda K."/>
            <person name="Yokoi T."/>
            <person name="Furuya T."/>
            <person name="Kikkawa E."/>
            <person name="Omura Y."/>
            <person name="Abe K."/>
            <person name="Kamihara K."/>
            <person name="Katsuta N."/>
            <person name="Sato K."/>
            <person name="Tanikawa M."/>
            <person name="Yamazaki M."/>
            <person name="Ninomiya K."/>
            <person name="Ishibashi T."/>
            <person name="Yamashita H."/>
            <person name="Murakawa K."/>
            <person name="Fujimori K."/>
            <person name="Tanai H."/>
            <person name="Kimata M."/>
            <person name="Watanabe M."/>
            <person name="Hiraoka S."/>
            <person name="Chiba Y."/>
            <person name="Ishida S."/>
            <person name="Ono Y."/>
            <person name="Takiguchi S."/>
            <person name="Watanabe S."/>
            <person name="Yosida M."/>
            <person name="Hotuta T."/>
            <person name="Kusano J."/>
            <person name="Kanehori K."/>
            <person name="Takahashi-Fujii A."/>
            <person name="Hara H."/>
            <person name="Tanase T.-O."/>
            <person name="Nomura Y."/>
            <person name="Togiya S."/>
            <person name="Komai F."/>
            <person name="Hara R."/>
            <person name="Takeuchi K."/>
            <person name="Arita M."/>
            <person name="Imose N."/>
            <person name="Musashino K."/>
            <person name="Yuuki H."/>
            <person name="Oshima A."/>
            <person name="Sasaki N."/>
            <person name="Aotsuka S."/>
            <person name="Yoshikawa Y."/>
            <person name="Matsunawa H."/>
            <person name="Ichihara T."/>
            <person name="Shiohata N."/>
            <person name="Sano S."/>
            <person name="Moriya S."/>
            <person name="Momiyama H."/>
            <person name="Satoh N."/>
            <person name="Takami S."/>
            <person name="Terashima Y."/>
            <person name="Suzuki O."/>
            <person name="Nakagawa S."/>
            <person name="Senoh A."/>
            <person name="Mizoguchi H."/>
            <person name="Goto Y."/>
            <person name="Shimizu F."/>
            <person name="Wakebe H."/>
            <person name="Hishigaki H."/>
            <person name="Watanabe T."/>
            <person name="Sugiyama A."/>
            <person name="Takemoto M."/>
            <person name="Kawakami B."/>
            <person name="Yamazaki M."/>
            <person name="Watanabe K."/>
            <person name="Kumagai A."/>
            <person name="Itakura S."/>
            <person name="Fukuzumi Y."/>
            <person name="Fujimori Y."/>
            <person name="Komiyama M."/>
            <person name="Tashiro H."/>
            <person name="Tanigami A."/>
            <person name="Fujiwara T."/>
            <person name="Ono T."/>
            <person name="Yamada K."/>
            <person name="Fujii Y."/>
            <person name="Ozaki K."/>
            <person name="Hirao M."/>
            <person name="Ohmori Y."/>
            <person name="Kawabata A."/>
            <person name="Hikiji T."/>
            <person name="Kobatake N."/>
            <person name="Inagaki H."/>
            <person name="Ikema Y."/>
            <person name="Okamoto S."/>
            <person name="Okitani R."/>
            <person name="Kawakami T."/>
            <person name="Noguchi S."/>
            <person name="Itoh T."/>
            <person name="Shigeta K."/>
            <person name="Senba T."/>
            <person name="Matsumura K."/>
            <person name="Nakajima Y."/>
            <person name="Mizuno T."/>
            <person name="Morinaga M."/>
            <person name="Sasaki M."/>
            <person name="Togashi T."/>
            <person name="Oyama M."/>
            <person name="Hata H."/>
            <person name="Watanabe M."/>
            <person name="Komatsu T."/>
            <person name="Mizushima-Sugano J."/>
            <person name="Satoh T."/>
            <person name="Shirai Y."/>
            <person name="Takahashi Y."/>
            <person name="Nakagawa K."/>
            <person name="Okumura K."/>
            <person name="Nagase T."/>
            <person name="Nomura N."/>
            <person name="Kikuchi H."/>
            <person name="Masuho Y."/>
            <person name="Yamashita R."/>
            <person name="Nakai K."/>
            <person name="Yada T."/>
            <person name="Nakamura Y."/>
            <person name="Ohara O."/>
            <person name="Isogai T."/>
            <person name="Sugano S."/>
        </authorList>
    </citation>
    <scope>NUCLEOTIDE SEQUENCE [LARGE SCALE MRNA]</scope>
</reference>
<reference key="5">
    <citation type="journal article" date="2004" name="Nature">
        <title>DNA sequence and analysis of human chromosome 9.</title>
        <authorList>
            <person name="Humphray S.J."/>
            <person name="Oliver K."/>
            <person name="Hunt A.R."/>
            <person name="Plumb R.W."/>
            <person name="Loveland J.E."/>
            <person name="Howe K.L."/>
            <person name="Andrews T.D."/>
            <person name="Searle S."/>
            <person name="Hunt S.E."/>
            <person name="Scott C.E."/>
            <person name="Jones M.C."/>
            <person name="Ainscough R."/>
            <person name="Almeida J.P."/>
            <person name="Ambrose K.D."/>
            <person name="Ashwell R.I.S."/>
            <person name="Babbage A.K."/>
            <person name="Babbage S."/>
            <person name="Bagguley C.L."/>
            <person name="Bailey J."/>
            <person name="Banerjee R."/>
            <person name="Barker D.J."/>
            <person name="Barlow K.F."/>
            <person name="Bates K."/>
            <person name="Beasley H."/>
            <person name="Beasley O."/>
            <person name="Bird C.P."/>
            <person name="Bray-Allen S."/>
            <person name="Brown A.J."/>
            <person name="Brown J.Y."/>
            <person name="Burford D."/>
            <person name="Burrill W."/>
            <person name="Burton J."/>
            <person name="Carder C."/>
            <person name="Carter N.P."/>
            <person name="Chapman J.C."/>
            <person name="Chen Y."/>
            <person name="Clarke G."/>
            <person name="Clark S.Y."/>
            <person name="Clee C.M."/>
            <person name="Clegg S."/>
            <person name="Collier R.E."/>
            <person name="Corby N."/>
            <person name="Crosier M."/>
            <person name="Cummings A.T."/>
            <person name="Davies J."/>
            <person name="Dhami P."/>
            <person name="Dunn M."/>
            <person name="Dutta I."/>
            <person name="Dyer L.W."/>
            <person name="Earthrowl M.E."/>
            <person name="Faulkner L."/>
            <person name="Fleming C.J."/>
            <person name="Frankish A."/>
            <person name="Frankland J.A."/>
            <person name="French L."/>
            <person name="Fricker D.G."/>
            <person name="Garner P."/>
            <person name="Garnett J."/>
            <person name="Ghori J."/>
            <person name="Gilbert J.G.R."/>
            <person name="Glison C."/>
            <person name="Grafham D.V."/>
            <person name="Gribble S."/>
            <person name="Griffiths C."/>
            <person name="Griffiths-Jones S."/>
            <person name="Grocock R."/>
            <person name="Guy J."/>
            <person name="Hall R.E."/>
            <person name="Hammond S."/>
            <person name="Harley J.L."/>
            <person name="Harrison E.S.I."/>
            <person name="Hart E.A."/>
            <person name="Heath P.D."/>
            <person name="Henderson C.D."/>
            <person name="Hopkins B.L."/>
            <person name="Howard P.J."/>
            <person name="Howden P.J."/>
            <person name="Huckle E."/>
            <person name="Johnson C."/>
            <person name="Johnson D."/>
            <person name="Joy A.A."/>
            <person name="Kay M."/>
            <person name="Keenan S."/>
            <person name="Kershaw J.K."/>
            <person name="Kimberley A.M."/>
            <person name="King A."/>
            <person name="Knights A."/>
            <person name="Laird G.K."/>
            <person name="Langford C."/>
            <person name="Lawlor S."/>
            <person name="Leongamornlert D.A."/>
            <person name="Leversha M."/>
            <person name="Lloyd C."/>
            <person name="Lloyd D.M."/>
            <person name="Lovell J."/>
            <person name="Martin S."/>
            <person name="Mashreghi-Mohammadi M."/>
            <person name="Matthews L."/>
            <person name="McLaren S."/>
            <person name="McLay K.E."/>
            <person name="McMurray A."/>
            <person name="Milne S."/>
            <person name="Nickerson T."/>
            <person name="Nisbett J."/>
            <person name="Nordsiek G."/>
            <person name="Pearce A.V."/>
            <person name="Peck A.I."/>
            <person name="Porter K.M."/>
            <person name="Pandian R."/>
            <person name="Pelan S."/>
            <person name="Phillimore B."/>
            <person name="Povey S."/>
            <person name="Ramsey Y."/>
            <person name="Rand V."/>
            <person name="Scharfe M."/>
            <person name="Sehra H.K."/>
            <person name="Shownkeen R."/>
            <person name="Sims S.K."/>
            <person name="Skuce C.D."/>
            <person name="Smith M."/>
            <person name="Steward C.A."/>
            <person name="Swarbreck D."/>
            <person name="Sycamore N."/>
            <person name="Tester J."/>
            <person name="Thorpe A."/>
            <person name="Tracey A."/>
            <person name="Tromans A."/>
            <person name="Thomas D.W."/>
            <person name="Wall M."/>
            <person name="Wallis J.M."/>
            <person name="West A.P."/>
            <person name="Whitehead S.L."/>
            <person name="Willey D.L."/>
            <person name="Williams S.A."/>
            <person name="Wilming L."/>
            <person name="Wray P.W."/>
            <person name="Young L."/>
            <person name="Ashurst J.L."/>
            <person name="Coulson A."/>
            <person name="Blocker H."/>
            <person name="Durbin R.M."/>
            <person name="Sulston J.E."/>
            <person name="Hubbard T."/>
            <person name="Jackson M.J."/>
            <person name="Bentley D.R."/>
            <person name="Beck S."/>
            <person name="Rogers J."/>
            <person name="Dunham I."/>
        </authorList>
    </citation>
    <scope>NUCLEOTIDE SEQUENCE [LARGE SCALE GENOMIC DNA]</scope>
</reference>
<reference key="6">
    <citation type="journal article" date="2004" name="Genome Res.">
        <title>The status, quality, and expansion of the NIH full-length cDNA project: the Mammalian Gene Collection (MGC).</title>
        <authorList>
            <consortium name="The MGC Project Team"/>
        </authorList>
    </citation>
    <scope>NUCLEOTIDE SEQUENCE [LARGE SCALE MRNA]</scope>
    <source>
        <tissue>Liver</tissue>
    </source>
</reference>
<reference key="7">
    <citation type="journal article" date="2003" name="EMBO J.">
        <title>Thiol-mediated protein retention in the endoplasmic reticulum: the role of ERp44.</title>
        <authorList>
            <person name="Anelli T."/>
            <person name="Alessio M."/>
            <person name="Bachi A."/>
            <person name="Bergamelli L."/>
            <person name="Bertoli G."/>
            <person name="Camerini S."/>
            <person name="Mezghrani A."/>
            <person name="Ruffato E."/>
            <person name="Simmen T."/>
            <person name="Sitia R."/>
        </authorList>
    </citation>
    <scope>FUNCTION</scope>
</reference>
<reference key="8">
    <citation type="journal article" date="2002" name="Proteomics">
        <title>Towards complete analysis of the platelet proteome.</title>
        <authorList>
            <person name="O'Neill E.E."/>
            <person name="Brock C.J."/>
            <person name="von Kriegsheim A.F."/>
            <person name="Pearce A.C."/>
            <person name="Dwek R.A."/>
            <person name="Watson S.P."/>
            <person name="Hebestreit H.F."/>
        </authorList>
    </citation>
    <scope>IDENTIFICATION BY MASS SPECTROMETRY</scope>
    <source>
        <tissue>Platelet</tissue>
    </source>
</reference>
<reference key="9">
    <citation type="journal article" date="2005" name="Cell">
        <title>Subtype-specific and ER lumenal environment-dependent regulation of inositol 1,4,5-trisphosphate receptor type 1 by ERp44.</title>
        <authorList>
            <person name="Higo T."/>
            <person name="Hattori M."/>
            <person name="Nakamura T."/>
            <person name="Natsume T."/>
            <person name="Michikawa T."/>
            <person name="Mikoshiba K."/>
        </authorList>
    </citation>
    <scope>FUNCTION</scope>
    <scope>INTERACTION WITH ITPR1</scope>
    <scope>SUBCELLULAR LOCATION</scope>
</reference>
<reference key="10">
    <citation type="journal article" date="2011" name="BMC Syst. Biol.">
        <title>Initial characterization of the human central proteome.</title>
        <authorList>
            <person name="Burkard T.R."/>
            <person name="Planyavsky M."/>
            <person name="Kaupe I."/>
            <person name="Breitwieser F.P."/>
            <person name="Buerckstuemmer T."/>
            <person name="Bennett K.L."/>
            <person name="Superti-Furga G."/>
            <person name="Colinge J."/>
        </authorList>
    </citation>
    <scope>IDENTIFICATION BY MASS SPECTROMETRY [LARGE SCALE ANALYSIS]</scope>
</reference>
<reference key="11">
    <citation type="journal article" date="2014" name="J. Proteomics">
        <title>An enzyme assisted RP-RPLC approach for in-depth analysis of human liver phosphoproteome.</title>
        <authorList>
            <person name="Bian Y."/>
            <person name="Song C."/>
            <person name="Cheng K."/>
            <person name="Dong M."/>
            <person name="Wang F."/>
            <person name="Huang J."/>
            <person name="Sun D."/>
            <person name="Wang L."/>
            <person name="Ye M."/>
            <person name="Zou H."/>
        </authorList>
    </citation>
    <scope>IDENTIFICATION BY MASS SPECTROMETRY [LARGE SCALE ANALYSIS]</scope>
    <source>
        <tissue>Liver</tissue>
    </source>
</reference>
<reference key="12">
    <citation type="journal article" date="2015" name="Proteomics">
        <title>N-terminome analysis of the human mitochondrial proteome.</title>
        <authorList>
            <person name="Vaca Jacome A.S."/>
            <person name="Rabilloud T."/>
            <person name="Schaeffer-Reiss C."/>
            <person name="Rompais M."/>
            <person name="Ayoub D."/>
            <person name="Lane L."/>
            <person name="Bairoch A."/>
            <person name="Van Dorsselaer A."/>
            <person name="Carapito C."/>
        </authorList>
    </citation>
    <scope>IDENTIFICATION BY MASS SPECTROMETRY [LARGE SCALE ANALYSIS]</scope>
</reference>
<reference key="13">
    <citation type="journal article" date="2018" name="EMBO J.">
        <title>Secretory kinase Fam20C tunes endoplasmic reticulum redox state via phosphorylation of Ero1alpha.</title>
        <authorList>
            <person name="Zhang J."/>
            <person name="Zhu Q."/>
            <person name="Wang X."/>
            <person name="Yu J."/>
            <person name="Chen X."/>
            <person name="Wang J."/>
            <person name="Wang X."/>
            <person name="Xiao J."/>
            <person name="Wang C.C."/>
            <person name="Wang L."/>
        </authorList>
    </citation>
    <scope>FUNCTION</scope>
    <scope>INTERACTION WITH ERO1A</scope>
</reference>
<reference key="14">
    <citation type="journal article" date="2008" name="EMBO Rep.">
        <title>Crystal structure of human ERp44 shows a dynamic functional modulation by its carboxy-terminal tail.</title>
        <authorList>
            <person name="Wang L."/>
            <person name="Wang L."/>
            <person name="Vavassori S."/>
            <person name="Li S."/>
            <person name="Ke H."/>
            <person name="Anelli T."/>
            <person name="Degano M."/>
            <person name="Ronzoni R."/>
            <person name="Sitia R."/>
            <person name="Sun F."/>
            <person name="Wang C.-C."/>
        </authorList>
    </citation>
    <scope>X-RAY CRYSTALLOGRAPHY (2.6 ANGSTROMS) OF 25-406</scope>
    <scope>DISULFIDE BONDS</scope>
</reference>
<evidence type="ECO:0000250" key="1"/>
<evidence type="ECO:0000250" key="2">
    <source>
        <dbReference type="UniProtKB" id="Q9D1Q6"/>
    </source>
</evidence>
<evidence type="ECO:0000255" key="3">
    <source>
        <dbReference type="PROSITE-ProRule" id="PRU00691"/>
    </source>
</evidence>
<evidence type="ECO:0000255" key="4">
    <source>
        <dbReference type="PROSITE-ProRule" id="PRU10138"/>
    </source>
</evidence>
<evidence type="ECO:0000256" key="5">
    <source>
        <dbReference type="SAM" id="MobiDB-lite"/>
    </source>
</evidence>
<evidence type="ECO:0000269" key="6">
    <source>
    </source>
</evidence>
<evidence type="ECO:0000269" key="7">
    <source>
    </source>
</evidence>
<evidence type="ECO:0000269" key="8">
    <source>
    </source>
</evidence>
<evidence type="ECO:0000269" key="9">
    <source>
    </source>
</evidence>
<evidence type="ECO:0000269" key="10">
    <source>
    </source>
</evidence>
<evidence type="ECO:0000305" key="11"/>
<evidence type="ECO:0007829" key="12">
    <source>
        <dbReference type="PDB" id="2R2J"/>
    </source>
</evidence>
<evidence type="ECO:0007829" key="13">
    <source>
        <dbReference type="PDB" id="5GU6"/>
    </source>
</evidence>
<evidence type="ECO:0007829" key="14">
    <source>
        <dbReference type="PDB" id="5GU7"/>
    </source>
</evidence>
<evidence type="ECO:0007829" key="15">
    <source>
        <dbReference type="PDB" id="5HQP"/>
    </source>
</evidence>
<organism>
    <name type="scientific">Homo sapiens</name>
    <name type="common">Human</name>
    <dbReference type="NCBI Taxonomy" id="9606"/>
    <lineage>
        <taxon>Eukaryota</taxon>
        <taxon>Metazoa</taxon>
        <taxon>Chordata</taxon>
        <taxon>Craniata</taxon>
        <taxon>Vertebrata</taxon>
        <taxon>Euteleostomi</taxon>
        <taxon>Mammalia</taxon>
        <taxon>Eutheria</taxon>
        <taxon>Euarchontoglires</taxon>
        <taxon>Primates</taxon>
        <taxon>Haplorrhini</taxon>
        <taxon>Catarrhini</taxon>
        <taxon>Hominidae</taxon>
        <taxon>Homo</taxon>
    </lineage>
</organism>
<feature type="signal peptide">
    <location>
        <begin position="1"/>
        <end position="29"/>
    </location>
</feature>
<feature type="chain" id="PRO_0000034180" description="Endoplasmic reticulum resident protein 44">
    <location>
        <begin position="30"/>
        <end position="406"/>
    </location>
</feature>
<feature type="domain" description="Thioredoxin" evidence="3">
    <location>
        <begin position="30"/>
        <end position="138"/>
    </location>
</feature>
<feature type="region of interest" description="Interaction with ITPR1" evidence="1">
    <location>
        <begin position="236"/>
        <end position="285"/>
    </location>
</feature>
<feature type="region of interest" description="Disordered" evidence="5">
    <location>
        <begin position="360"/>
        <end position="387"/>
    </location>
</feature>
<feature type="short sequence motif" description="Prevents secretion from ER" evidence="4">
    <location>
        <begin position="403"/>
        <end position="406"/>
    </location>
</feature>
<feature type="compositionally biased region" description="Polar residues" evidence="5">
    <location>
        <begin position="377"/>
        <end position="387"/>
    </location>
</feature>
<feature type="disulfide bond" description="Interchain (with ERO1A)" evidence="9">
    <location>
        <position position="58"/>
    </location>
</feature>
<feature type="disulfide bond" evidence="9">
    <location>
        <begin position="189"/>
        <end position="241"/>
    </location>
</feature>
<feature type="disulfide bond" evidence="9">
    <location>
        <begin position="301"/>
        <end position="318"/>
    </location>
</feature>
<feature type="sequence conflict" description="In Ref. 3; AAQ89407." evidence="11" ref="3">
    <original>D</original>
    <variation>A</variation>
    <location>
        <position position="35"/>
    </location>
</feature>
<feature type="strand" evidence="13">
    <location>
        <begin position="30"/>
        <end position="33"/>
    </location>
</feature>
<feature type="turn" evidence="13">
    <location>
        <begin position="36"/>
        <end position="38"/>
    </location>
</feature>
<feature type="helix" evidence="13">
    <location>
        <begin position="39"/>
        <end position="45"/>
    </location>
</feature>
<feature type="strand" evidence="13">
    <location>
        <begin position="47"/>
        <end position="54"/>
    </location>
</feature>
<feature type="helix" evidence="13">
    <location>
        <begin position="59"/>
        <end position="78"/>
    </location>
</feature>
<feature type="turn" evidence="15">
    <location>
        <begin position="81"/>
        <end position="83"/>
    </location>
</feature>
<feature type="strand" evidence="13">
    <location>
        <begin position="86"/>
        <end position="91"/>
    </location>
</feature>
<feature type="turn" evidence="13">
    <location>
        <begin position="92"/>
        <end position="94"/>
    </location>
</feature>
<feature type="helix" evidence="13">
    <location>
        <begin position="96"/>
        <end position="101"/>
    </location>
</feature>
<feature type="strand" evidence="13">
    <location>
        <begin position="106"/>
        <end position="114"/>
    </location>
</feature>
<feature type="strand" evidence="14">
    <location>
        <begin position="117"/>
        <end position="122"/>
    </location>
</feature>
<feature type="helix" evidence="13">
    <location>
        <begin position="129"/>
        <end position="140"/>
    </location>
</feature>
<feature type="strand" evidence="12">
    <location>
        <begin position="145"/>
        <end position="147"/>
    </location>
</feature>
<feature type="helix" evidence="13">
    <location>
        <begin position="151"/>
        <end position="154"/>
    </location>
</feature>
<feature type="strand" evidence="15">
    <location>
        <begin position="158"/>
        <end position="160"/>
    </location>
</feature>
<feature type="strand" evidence="13">
    <location>
        <begin position="162"/>
        <end position="166"/>
    </location>
</feature>
<feature type="strand" evidence="13">
    <location>
        <begin position="170"/>
        <end position="172"/>
    </location>
</feature>
<feature type="helix" evidence="13">
    <location>
        <begin position="173"/>
        <end position="185"/>
    </location>
</feature>
<feature type="turn" evidence="13">
    <location>
        <begin position="186"/>
        <end position="188"/>
    </location>
</feature>
<feature type="strand" evidence="13">
    <location>
        <begin position="189"/>
        <end position="194"/>
    </location>
</feature>
<feature type="helix" evidence="13">
    <location>
        <begin position="196"/>
        <end position="199"/>
    </location>
</feature>
<feature type="helix" evidence="13">
    <location>
        <begin position="200"/>
        <end position="202"/>
    </location>
</feature>
<feature type="strand" evidence="13">
    <location>
        <begin position="206"/>
        <end position="212"/>
    </location>
</feature>
<feature type="strand" evidence="13">
    <location>
        <begin position="214"/>
        <end position="218"/>
    </location>
</feature>
<feature type="helix" evidence="13">
    <location>
        <begin position="230"/>
        <end position="241"/>
    </location>
</feature>
<feature type="strand" evidence="13">
    <location>
        <begin position="244"/>
        <end position="247"/>
    </location>
</feature>
<feature type="turn" evidence="13">
    <location>
        <begin position="250"/>
        <end position="252"/>
    </location>
</feature>
<feature type="helix" evidence="13">
    <location>
        <begin position="253"/>
        <end position="258"/>
    </location>
</feature>
<feature type="strand" evidence="13">
    <location>
        <begin position="263"/>
        <end position="268"/>
    </location>
</feature>
<feature type="helix" evidence="13">
    <location>
        <begin position="273"/>
        <end position="286"/>
    </location>
</feature>
<feature type="helix" evidence="13">
    <location>
        <begin position="288"/>
        <end position="290"/>
    </location>
</feature>
<feature type="turn" evidence="13">
    <location>
        <begin position="291"/>
        <end position="293"/>
    </location>
</feature>
<feature type="strand" evidence="13">
    <location>
        <begin position="294"/>
        <end position="300"/>
    </location>
</feature>
<feature type="turn" evidence="13">
    <location>
        <begin position="301"/>
        <end position="303"/>
    </location>
</feature>
<feature type="helix" evidence="13">
    <location>
        <begin position="305"/>
        <end position="310"/>
    </location>
</feature>
<feature type="helix" evidence="13">
    <location>
        <begin position="315"/>
        <end position="317"/>
    </location>
</feature>
<feature type="strand" evidence="13">
    <location>
        <begin position="319"/>
        <end position="324"/>
    </location>
</feature>
<feature type="strand" evidence="13">
    <location>
        <begin position="326"/>
        <end position="331"/>
    </location>
</feature>
<feature type="helix" evidence="13">
    <location>
        <begin position="335"/>
        <end position="339"/>
    </location>
</feature>
<feature type="helix" evidence="13">
    <location>
        <begin position="343"/>
        <end position="352"/>
    </location>
</feature>
<feature type="helix" evidence="13">
    <location>
        <begin position="355"/>
        <end position="362"/>
    </location>
</feature>
<feature type="helix" evidence="13">
    <location>
        <begin position="387"/>
        <end position="390"/>
    </location>
</feature>
<feature type="turn" evidence="13">
    <location>
        <begin position="394"/>
        <end position="396"/>
    </location>
</feature>
<feature type="strand" evidence="13">
    <location>
        <begin position="397"/>
        <end position="400"/>
    </location>
</feature>
<accession>Q9BS26</accession>
<accession>O60319</accession>
<accession>Q4VXC1</accession>
<accession>Q5VWZ7</accession>
<accession>Q6UW14</accession>
<accession>Q8WX67</accession>
<proteinExistence type="evidence at protein level"/>
<keyword id="KW-0002">3D-structure</keyword>
<keyword id="KW-0143">Chaperone</keyword>
<keyword id="KW-0903">Direct protein sequencing</keyword>
<keyword id="KW-1015">Disulfide bond</keyword>
<keyword id="KW-0256">Endoplasmic reticulum</keyword>
<keyword id="KW-1267">Proteomics identification</keyword>
<keyword id="KW-1185">Reference proteome</keyword>
<keyword id="KW-0732">Signal</keyword>
<keyword id="KW-0346">Stress response</keyword>